<dbReference type="EMBL" id="L23088">
    <property type="protein sequence ID" value="AAA60325.1"/>
    <property type="molecule type" value="mRNA"/>
</dbReference>
<dbReference type="PIR" id="I53821">
    <property type="entry name" value="I53821"/>
</dbReference>
<dbReference type="RefSeq" id="NP_037246.1">
    <property type="nucleotide sequence ID" value="NM_013114.1"/>
</dbReference>
<dbReference type="SMR" id="P98106"/>
<dbReference type="FunCoup" id="P98106">
    <property type="interactions" value="140"/>
</dbReference>
<dbReference type="STRING" id="10116.ENSRNOP00000068338"/>
<dbReference type="ChEMBL" id="CHEMBL3879832"/>
<dbReference type="GlyCosmos" id="P98106">
    <property type="glycosylation" value="10 sites, No reported glycans"/>
</dbReference>
<dbReference type="GlyGen" id="P98106">
    <property type="glycosylation" value="12 sites"/>
</dbReference>
<dbReference type="PhosphoSitePlus" id="P98106"/>
<dbReference type="PaxDb" id="10116-ENSRNOP00000068338"/>
<dbReference type="GeneID" id="25651"/>
<dbReference type="KEGG" id="rno:25651"/>
<dbReference type="UCSC" id="RGD:3656">
    <property type="organism name" value="rat"/>
</dbReference>
<dbReference type="AGR" id="RGD:3656"/>
<dbReference type="CTD" id="6403"/>
<dbReference type="RGD" id="3656">
    <property type="gene designation" value="Selp"/>
</dbReference>
<dbReference type="eggNOG" id="KOG4297">
    <property type="taxonomic scope" value="Eukaryota"/>
</dbReference>
<dbReference type="InParanoid" id="P98106"/>
<dbReference type="PhylomeDB" id="P98106"/>
<dbReference type="Reactome" id="R-RNO-114608">
    <property type="pathway name" value="Platelet degranulation"/>
</dbReference>
<dbReference type="Reactome" id="R-RNO-202733">
    <property type="pathway name" value="Cell surface interactions at the vascular wall"/>
</dbReference>
<dbReference type="PRO" id="PR:P98106"/>
<dbReference type="Proteomes" id="UP000002494">
    <property type="component" value="Unplaced"/>
</dbReference>
<dbReference type="GO" id="GO:0009897">
    <property type="term" value="C:external side of plasma membrane"/>
    <property type="evidence" value="ECO:0000314"/>
    <property type="project" value="RGD"/>
</dbReference>
<dbReference type="GO" id="GO:0005615">
    <property type="term" value="C:extracellular space"/>
    <property type="evidence" value="ECO:0000314"/>
    <property type="project" value="RGD"/>
</dbReference>
<dbReference type="GO" id="GO:0016020">
    <property type="term" value="C:membrane"/>
    <property type="evidence" value="ECO:0000266"/>
    <property type="project" value="RGD"/>
</dbReference>
<dbReference type="GO" id="GO:0005886">
    <property type="term" value="C:plasma membrane"/>
    <property type="evidence" value="ECO:0000250"/>
    <property type="project" value="UniProtKB"/>
</dbReference>
<dbReference type="GO" id="GO:0031092">
    <property type="term" value="C:platelet alpha granule membrane"/>
    <property type="evidence" value="ECO:0000266"/>
    <property type="project" value="RGD"/>
</dbReference>
<dbReference type="GO" id="GO:0005509">
    <property type="term" value="F:calcium ion binding"/>
    <property type="evidence" value="ECO:0000250"/>
    <property type="project" value="UniProtKB"/>
</dbReference>
<dbReference type="GO" id="GO:0048306">
    <property type="term" value="F:calcium-dependent protein binding"/>
    <property type="evidence" value="ECO:0000266"/>
    <property type="project" value="RGD"/>
</dbReference>
<dbReference type="GO" id="GO:0042806">
    <property type="term" value="F:fucose binding"/>
    <property type="evidence" value="ECO:0000266"/>
    <property type="project" value="RGD"/>
</dbReference>
<dbReference type="GO" id="GO:0008201">
    <property type="term" value="F:heparin binding"/>
    <property type="evidence" value="ECO:0000266"/>
    <property type="project" value="RGD"/>
</dbReference>
<dbReference type="GO" id="GO:0005178">
    <property type="term" value="F:integrin binding"/>
    <property type="evidence" value="ECO:0000250"/>
    <property type="project" value="UniProtKB"/>
</dbReference>
<dbReference type="GO" id="GO:0001530">
    <property type="term" value="F:lipopolysaccharide binding"/>
    <property type="evidence" value="ECO:0000266"/>
    <property type="project" value="RGD"/>
</dbReference>
<dbReference type="GO" id="GO:0070492">
    <property type="term" value="F:oligosaccharide binding"/>
    <property type="evidence" value="ECO:0000250"/>
    <property type="project" value="UniProtKB"/>
</dbReference>
<dbReference type="GO" id="GO:0033691">
    <property type="term" value="F:sialic acid binding"/>
    <property type="evidence" value="ECO:0000266"/>
    <property type="project" value="RGD"/>
</dbReference>
<dbReference type="GO" id="GO:0016339">
    <property type="term" value="P:calcium-dependent cell-cell adhesion via plasma membrane cell adhesion molecules"/>
    <property type="evidence" value="ECO:0000250"/>
    <property type="project" value="UniProtKB"/>
</dbReference>
<dbReference type="GO" id="GO:0098609">
    <property type="term" value="P:cell-cell adhesion"/>
    <property type="evidence" value="ECO:0000315"/>
    <property type="project" value="RGD"/>
</dbReference>
<dbReference type="GO" id="GO:0007157">
    <property type="term" value="P:heterophilic cell-cell adhesion via plasma membrane cell adhesion molecules"/>
    <property type="evidence" value="ECO:0000266"/>
    <property type="project" value="RGD"/>
</dbReference>
<dbReference type="GO" id="GO:0006954">
    <property type="term" value="P:inflammatory response"/>
    <property type="evidence" value="ECO:0000266"/>
    <property type="project" value="RGD"/>
</dbReference>
<dbReference type="GO" id="GO:0007159">
    <property type="term" value="P:leukocyte cell-cell adhesion"/>
    <property type="evidence" value="ECO:0000266"/>
    <property type="project" value="RGD"/>
</dbReference>
<dbReference type="GO" id="GO:0050900">
    <property type="term" value="P:leukocyte migration"/>
    <property type="evidence" value="ECO:0000315"/>
    <property type="project" value="RGD"/>
</dbReference>
<dbReference type="GO" id="GO:0050901">
    <property type="term" value="P:leukocyte tethering or rolling"/>
    <property type="evidence" value="ECO:0000250"/>
    <property type="project" value="UniProtKB"/>
</dbReference>
<dbReference type="GO" id="GO:0045785">
    <property type="term" value="P:positive regulation of cell adhesion"/>
    <property type="evidence" value="ECO:0000315"/>
    <property type="project" value="RGD"/>
</dbReference>
<dbReference type="GO" id="GO:0002687">
    <property type="term" value="P:positive regulation of leukocyte migration"/>
    <property type="evidence" value="ECO:0000266"/>
    <property type="project" value="RGD"/>
</dbReference>
<dbReference type="GO" id="GO:1903238">
    <property type="term" value="P:positive regulation of leukocyte tethering or rolling"/>
    <property type="evidence" value="ECO:0000250"/>
    <property type="project" value="UniProtKB"/>
</dbReference>
<dbReference type="GO" id="GO:0051897">
    <property type="term" value="P:positive regulation of phosphatidylinositol 3-kinase/protein kinase B signal transduction"/>
    <property type="evidence" value="ECO:0000266"/>
    <property type="project" value="RGD"/>
</dbReference>
<dbReference type="GO" id="GO:0010572">
    <property type="term" value="P:positive regulation of platelet activation"/>
    <property type="evidence" value="ECO:0000266"/>
    <property type="project" value="RGD"/>
</dbReference>
<dbReference type="GO" id="GO:0002691">
    <property type="term" value="P:regulation of cellular extravasation"/>
    <property type="evidence" value="ECO:0000315"/>
    <property type="project" value="RGD"/>
</dbReference>
<dbReference type="GO" id="GO:0033623">
    <property type="term" value="P:regulation of integrin activation"/>
    <property type="evidence" value="ECO:0000266"/>
    <property type="project" value="RGD"/>
</dbReference>
<dbReference type="GO" id="GO:0034097">
    <property type="term" value="P:response to cytokine"/>
    <property type="evidence" value="ECO:0000318"/>
    <property type="project" value="GO_Central"/>
</dbReference>
<dbReference type="GO" id="GO:0032496">
    <property type="term" value="P:response to lipopolysaccharide"/>
    <property type="evidence" value="ECO:0000270"/>
    <property type="project" value="RGD"/>
</dbReference>
<dbReference type="CDD" id="cd00033">
    <property type="entry name" value="CCP"/>
    <property type="match status" value="8"/>
</dbReference>
<dbReference type="CDD" id="cd03592">
    <property type="entry name" value="CLECT_selectins_like"/>
    <property type="match status" value="1"/>
</dbReference>
<dbReference type="CDD" id="cd00054">
    <property type="entry name" value="EGF_CA"/>
    <property type="match status" value="1"/>
</dbReference>
<dbReference type="FunFam" id="3.10.100.10:FF:000007">
    <property type="entry name" value="L-selectin"/>
    <property type="match status" value="1"/>
</dbReference>
<dbReference type="FunFam" id="2.10.25.10:FF:000176">
    <property type="entry name" value="Selectin P"/>
    <property type="match status" value="1"/>
</dbReference>
<dbReference type="FunFam" id="2.10.70.10:FF:000001">
    <property type="entry name" value="Selectin P"/>
    <property type="match status" value="8"/>
</dbReference>
<dbReference type="Gene3D" id="2.10.70.10">
    <property type="entry name" value="Complement Module, domain 1"/>
    <property type="match status" value="8"/>
</dbReference>
<dbReference type="Gene3D" id="2.10.25.10">
    <property type="entry name" value="Laminin"/>
    <property type="match status" value="1"/>
</dbReference>
<dbReference type="Gene3D" id="3.10.100.10">
    <property type="entry name" value="Mannose-Binding Protein A, subunit A"/>
    <property type="match status" value="1"/>
</dbReference>
<dbReference type="InterPro" id="IPR001304">
    <property type="entry name" value="C-type_lectin-like"/>
</dbReference>
<dbReference type="InterPro" id="IPR016186">
    <property type="entry name" value="C-type_lectin-like/link_sf"/>
</dbReference>
<dbReference type="InterPro" id="IPR018378">
    <property type="entry name" value="C-type_lectin_CS"/>
</dbReference>
<dbReference type="InterPro" id="IPR050350">
    <property type="entry name" value="Compl-Cell_Adhes-Reg"/>
</dbReference>
<dbReference type="InterPro" id="IPR016187">
    <property type="entry name" value="CTDL_fold"/>
</dbReference>
<dbReference type="InterPro" id="IPR000742">
    <property type="entry name" value="EGF-like_dom"/>
</dbReference>
<dbReference type="InterPro" id="IPR033991">
    <property type="entry name" value="Selectin_CTLD"/>
</dbReference>
<dbReference type="InterPro" id="IPR002396">
    <property type="entry name" value="Selectin_superfamily"/>
</dbReference>
<dbReference type="InterPro" id="IPR035976">
    <property type="entry name" value="Sushi/SCR/CCP_sf"/>
</dbReference>
<dbReference type="InterPro" id="IPR000436">
    <property type="entry name" value="Sushi_SCR_CCP_dom"/>
</dbReference>
<dbReference type="PANTHER" id="PTHR19325">
    <property type="entry name" value="COMPLEMENT COMPONENT-RELATED SUSHI DOMAIN-CONTAINING"/>
    <property type="match status" value="1"/>
</dbReference>
<dbReference type="PANTHER" id="PTHR19325:SF493">
    <property type="entry name" value="E-SELECTIN"/>
    <property type="match status" value="1"/>
</dbReference>
<dbReference type="Pfam" id="PF00059">
    <property type="entry name" value="Lectin_C"/>
    <property type="match status" value="1"/>
</dbReference>
<dbReference type="Pfam" id="PF00084">
    <property type="entry name" value="Sushi"/>
    <property type="match status" value="8"/>
</dbReference>
<dbReference type="PRINTS" id="PR00343">
    <property type="entry name" value="SELECTIN"/>
</dbReference>
<dbReference type="SMART" id="SM00032">
    <property type="entry name" value="CCP"/>
    <property type="match status" value="8"/>
</dbReference>
<dbReference type="SMART" id="SM00034">
    <property type="entry name" value="CLECT"/>
    <property type="match status" value="1"/>
</dbReference>
<dbReference type="SUPFAM" id="SSF56436">
    <property type="entry name" value="C-type lectin-like"/>
    <property type="match status" value="1"/>
</dbReference>
<dbReference type="SUPFAM" id="SSF57535">
    <property type="entry name" value="Complement control module/SCR domain"/>
    <property type="match status" value="8"/>
</dbReference>
<dbReference type="SUPFAM" id="SSF57196">
    <property type="entry name" value="EGF/Laminin"/>
    <property type="match status" value="1"/>
</dbReference>
<dbReference type="PROSITE" id="PS00615">
    <property type="entry name" value="C_TYPE_LECTIN_1"/>
    <property type="match status" value="1"/>
</dbReference>
<dbReference type="PROSITE" id="PS50041">
    <property type="entry name" value="C_TYPE_LECTIN_2"/>
    <property type="match status" value="1"/>
</dbReference>
<dbReference type="PROSITE" id="PS00022">
    <property type="entry name" value="EGF_1"/>
    <property type="match status" value="1"/>
</dbReference>
<dbReference type="PROSITE" id="PS01186">
    <property type="entry name" value="EGF_2"/>
    <property type="match status" value="1"/>
</dbReference>
<dbReference type="PROSITE" id="PS50026">
    <property type="entry name" value="EGF_3"/>
    <property type="match status" value="1"/>
</dbReference>
<dbReference type="PROSITE" id="PS50923">
    <property type="entry name" value="SUSHI"/>
    <property type="match status" value="8"/>
</dbReference>
<proteinExistence type="evidence at transcript level"/>
<name>LYAM3_RAT</name>
<comment type="function">
    <text evidence="2">Ca(2+)-dependent receptor for myeloid cells that binds to carbohydrates on neutrophils and monocytes. Mediates the interaction of activated endothelial cells or platelets with leukocytes. The ligand recognized is sialyl-Lewis X. Mediates rapid rolling of leukocyte rolling over vascular surfaces during the initial steps in inflammation through interaction with SELPLG. Mediates cell-cell interactions and cell adhesion via the interaction with integrin alpha-IIb/beta3 (ITGA2B:ITGB3) and integrin alpha-V/beta-3 (ITGAV:ITGB3) (By similarity).</text>
</comment>
<comment type="subunit">
    <text evidence="2">Interacts with SNX17. Interacts with SELPLG/PSGL1 and PODXL2 and mediates neutrophil adhesion and leukocyte rolling. This interaction requires the sialyl-Lewis X epitope of SELPLG and PODXL2, and specific tyrosine sulfation on SELPLG. Interacts (via C-type lectin domain) with alpha-IIb/beta3 integrin ITGA2B:ITGB3 and alpha-V/beta-3 integrin ITGAV:ITGB3 (By similarity). Interacts with alpha5/beta1 integrin ITGA5:ITGB1 and alpha4/beta1 integrin ITGA4:ITGB (By similarity).</text>
</comment>
<comment type="subcellular location">
    <subcellularLocation>
        <location evidence="2">Cell membrane</location>
        <topology evidence="2">Single-pass type I membrane protein</topology>
    </subcellularLocation>
</comment>
<comment type="tissue specificity">
    <text evidence="7">Not detected in the absence of exposure to lipopolysaccharide (LPS). Detected only after exposure to lipopolysaccharide (LPS) in the tissues examined: spleen, lung, brain, liver, heart, kidney, thymus and small intestine.</text>
</comment>
<comment type="induction">
    <text evidence="7">By exposure to bacterial lipopolysaccharide (LPS).</text>
</comment>
<comment type="domain">
    <text evidence="2">The C-type lectin domain is required for binding to integrins (By similarity). Binding to soluble integrins alpha-V/beta-3 (ITGAV:ITGB3) and alpha-IIb/beta3 (ITGA2B:ITGB) is cation-dependent (By similarity). Binds to the allosteric site (site 2) of integrins and activates them (By similarity). The interaction with integrins may mediate cell-cell interactions and cell adhesion (By similarity).</text>
</comment>
<comment type="similarity">
    <text evidence="8">Belongs to the selectin/LECAM family.</text>
</comment>
<sequence length="768" mass="83517">MAGCPKGSWKPRLRSVVLGAAQLIWLSALISELVNRKKVATWTYNYSTKAYSWNNSRAFCKRHFTDLVAIQNKNEIAHLNDVIPYVNSYYWIGIRKINNKWTWVGTNKTLTAEAENWADNEPNNKRNNQDCVEIYIKSNSAPGKWNDEPCFKRKRALCYTASCQDMSCNSQGERIETIGSYTCSCYPGFYGPECEYVQECGKFDIPQHVLMNCSHPLGDFSFSSQCTFSCPEGYDLNGPSEMQCLASGIWTNNPPQCKAVQCQSLEAPLHGTMDCTHPLAAFAYDSSCKFECQPGYRMRGSDILHCTDSGQWSEPLPTCEAIACEPLESPLHGSMDCFPSTGAFGYNSSCTFRCTEGFVLMGNDAIHCADLGQWTAPAPVCEALQCQEFPVPSKAQVSCSDPFGPLKYQSACSFSCDEGSLLVGASVIRCLATGHWSEAPPECQAVSCTPLLSPENGTMTCIQPLGHSNYKSTCQFMCDEGFYLSGPERLDCSPSGHWTGSPPMCEAIKCPEIFAPEQGSLDCSHVHGEFSVGSTCHFSCNEEFELLGSRNVECTVSGRWSAPPPTCKGVTSLPVPSVRCPALTTPGQGTMSCRHHLESFGPNTTCYFGCKTGFTLRGANSLRCGASGQWTAVTPVCRAVKCSELHMDTAVAMNCSNPWGNFSYGSTCAFHCPEGQSLNGSARTTCGEDGHWSDAMPTCQAGTLTIQEALTYLGGALASTSGLAVGGTLLALLRKRLRKKDDGKCPLNPHSHLGTYGVFTNAAYDPTP</sequence>
<organism>
    <name type="scientific">Rattus norvegicus</name>
    <name type="common">Rat</name>
    <dbReference type="NCBI Taxonomy" id="10116"/>
    <lineage>
        <taxon>Eukaryota</taxon>
        <taxon>Metazoa</taxon>
        <taxon>Chordata</taxon>
        <taxon>Craniata</taxon>
        <taxon>Vertebrata</taxon>
        <taxon>Euteleostomi</taxon>
        <taxon>Mammalia</taxon>
        <taxon>Eutheria</taxon>
        <taxon>Euarchontoglires</taxon>
        <taxon>Glires</taxon>
        <taxon>Rodentia</taxon>
        <taxon>Myomorpha</taxon>
        <taxon>Muroidea</taxon>
        <taxon>Muridae</taxon>
        <taxon>Murinae</taxon>
        <taxon>Rattus</taxon>
    </lineage>
</organism>
<gene>
    <name type="primary">Selp</name>
</gene>
<reference key="1">
    <citation type="journal article" date="1994" name="Gene">
        <title>Cloning, sequence comparison and in vivo expression of the gene encoding rat P-selectin.</title>
        <authorList>
            <person name="Auchampach J.A."/>
            <person name="Oliver M.G."/>
            <person name="Anderson D.C."/>
            <person name="Manning A.M."/>
        </authorList>
    </citation>
    <scope>NUCLEOTIDE SEQUENCE [MRNA]</scope>
    <scope>TISSUE SPECIFICITY</scope>
    <scope>INDUCTION BY BACTERIAL LIPOPOLYSACCHARIDE</scope>
    <source>
        <tissue>Lung</tissue>
    </source>
</reference>
<evidence type="ECO:0000250" key="1"/>
<evidence type="ECO:0000250" key="2">
    <source>
        <dbReference type="UniProtKB" id="P16109"/>
    </source>
</evidence>
<evidence type="ECO:0000255" key="3"/>
<evidence type="ECO:0000255" key="4">
    <source>
        <dbReference type="PROSITE-ProRule" id="PRU00040"/>
    </source>
</evidence>
<evidence type="ECO:0000255" key="5">
    <source>
        <dbReference type="PROSITE-ProRule" id="PRU00076"/>
    </source>
</evidence>
<evidence type="ECO:0000255" key="6">
    <source>
        <dbReference type="PROSITE-ProRule" id="PRU00302"/>
    </source>
</evidence>
<evidence type="ECO:0000269" key="7">
    <source>
    </source>
</evidence>
<evidence type="ECO:0000305" key="8"/>
<keyword id="KW-0106">Calcium</keyword>
<keyword id="KW-0130">Cell adhesion</keyword>
<keyword id="KW-1003">Cell membrane</keyword>
<keyword id="KW-1015">Disulfide bond</keyword>
<keyword id="KW-0245">EGF-like domain</keyword>
<keyword id="KW-0325">Glycoprotein</keyword>
<keyword id="KW-0430">Lectin</keyword>
<keyword id="KW-0449">Lipoprotein</keyword>
<keyword id="KW-0472">Membrane</keyword>
<keyword id="KW-0479">Metal-binding</keyword>
<keyword id="KW-0564">Palmitate</keyword>
<keyword id="KW-1185">Reference proteome</keyword>
<keyword id="KW-0677">Repeat</keyword>
<keyword id="KW-0732">Signal</keyword>
<keyword id="KW-0768">Sushi</keyword>
<keyword id="KW-0812">Transmembrane</keyword>
<keyword id="KW-1133">Transmembrane helix</keyword>
<protein>
    <recommendedName>
        <fullName>P-selectin</fullName>
    </recommendedName>
    <alternativeName>
        <fullName>CD62 antigen-like family member P</fullName>
    </alternativeName>
    <alternativeName>
        <fullName>Granule membrane protein 140</fullName>
        <shortName>GMP-140</shortName>
    </alternativeName>
    <alternativeName>
        <fullName>Leukocyte-endothelial cell adhesion molecule 3</fullName>
        <shortName>LECAM3</shortName>
    </alternativeName>
    <alternativeName>
        <fullName>Platelet activation dependent granule-external membrane protein</fullName>
        <shortName>PADGEM</shortName>
    </alternativeName>
    <cdAntigenName>CD62P</cdAntigenName>
</protein>
<feature type="signal peptide" evidence="3">
    <location>
        <begin position="1"/>
        <end position="41"/>
    </location>
</feature>
<feature type="chain" id="PRO_0000017500" description="P-selectin">
    <location>
        <begin position="42"/>
        <end position="768"/>
    </location>
</feature>
<feature type="topological domain" description="Extracellular" evidence="3">
    <location>
        <begin position="42"/>
        <end position="709"/>
    </location>
</feature>
<feature type="transmembrane region" description="Helical" evidence="3">
    <location>
        <begin position="710"/>
        <end position="733"/>
    </location>
</feature>
<feature type="topological domain" description="Cytoplasmic" evidence="3">
    <location>
        <begin position="734"/>
        <end position="768"/>
    </location>
</feature>
<feature type="domain" description="C-type lectin" evidence="4">
    <location>
        <begin position="58"/>
        <end position="158"/>
    </location>
</feature>
<feature type="domain" description="EGF-like" evidence="5">
    <location>
        <begin position="159"/>
        <end position="195"/>
    </location>
</feature>
<feature type="domain" description="Sushi 1" evidence="6">
    <location>
        <begin position="198"/>
        <end position="259"/>
    </location>
</feature>
<feature type="domain" description="Sushi 2" evidence="6">
    <location>
        <begin position="260"/>
        <end position="321"/>
    </location>
</feature>
<feature type="domain" description="Sushi 3" evidence="6">
    <location>
        <begin position="322"/>
        <end position="383"/>
    </location>
</feature>
<feature type="domain" description="Sushi 4" evidence="6">
    <location>
        <begin position="384"/>
        <end position="445"/>
    </location>
</feature>
<feature type="domain" description="Sushi 5" evidence="6">
    <location>
        <begin position="446"/>
        <end position="507"/>
    </location>
</feature>
<feature type="domain" description="Sushi 6" evidence="6">
    <location>
        <begin position="508"/>
        <end position="569"/>
    </location>
</feature>
<feature type="domain" description="Sushi 7" evidence="6">
    <location>
        <begin position="578"/>
        <end position="639"/>
    </location>
</feature>
<feature type="domain" description="Sushi 8" evidence="6">
    <location>
        <begin position="640"/>
        <end position="701"/>
    </location>
</feature>
<feature type="region of interest" description="Interaction with SNX17" evidence="1">
    <location>
        <begin position="759"/>
        <end position="768"/>
    </location>
</feature>
<feature type="short sequence motif" description="Endocytosis signal" evidence="8">
    <location>
        <begin position="756"/>
        <end position="759"/>
    </location>
</feature>
<feature type="binding site" evidence="2">
    <location>
        <position position="121"/>
    </location>
    <ligand>
        <name>Ca(2+)</name>
        <dbReference type="ChEBI" id="CHEBI:29108"/>
    </ligand>
</feature>
<feature type="binding site" evidence="2">
    <location>
        <position position="123"/>
    </location>
    <ligand>
        <name>a carbohydrate</name>
        <dbReference type="ChEBI" id="CHEBI:16646"/>
    </ligand>
</feature>
<feature type="binding site" evidence="2">
    <location>
        <position position="123"/>
    </location>
    <ligand>
        <name>Ca(2+)</name>
        <dbReference type="ChEBI" id="CHEBI:29108"/>
    </ligand>
</feature>
<feature type="binding site" evidence="2">
    <location>
        <position position="124"/>
    </location>
    <ligand>
        <name>Ca(2+)</name>
        <dbReference type="ChEBI" id="CHEBI:29108"/>
    </ligand>
</feature>
<feature type="binding site" evidence="2">
    <location>
        <position position="133"/>
    </location>
    <ligand>
        <name>a carbohydrate</name>
        <dbReference type="ChEBI" id="CHEBI:16646"/>
    </ligand>
</feature>
<feature type="binding site" evidence="2">
    <location>
        <position position="146"/>
    </location>
    <ligand>
        <name>a carbohydrate</name>
        <dbReference type="ChEBI" id="CHEBI:16646"/>
    </ligand>
</feature>
<feature type="binding site" evidence="2">
    <location>
        <position position="146"/>
    </location>
    <ligand>
        <name>Ca(2+)</name>
        <dbReference type="ChEBI" id="CHEBI:29108"/>
    </ligand>
</feature>
<feature type="binding site" evidence="2">
    <location>
        <position position="147"/>
    </location>
    <ligand>
        <name>Ca(2+)</name>
        <dbReference type="ChEBI" id="CHEBI:29108"/>
    </ligand>
</feature>
<feature type="lipid moiety-binding region" description="S-palmitoyl cysteine; alternate" evidence="2">
    <location>
        <position position="745"/>
    </location>
</feature>
<feature type="lipid moiety-binding region" description="S-stearoyl cysteine; alternate" evidence="2">
    <location>
        <position position="745"/>
    </location>
</feature>
<feature type="glycosylation site" description="N-linked (GlcNAc...) asparagine" evidence="3">
    <location>
        <position position="45"/>
    </location>
</feature>
<feature type="glycosylation site" description="N-linked (GlcNAc...) asparagine" evidence="3">
    <location>
        <position position="54"/>
    </location>
</feature>
<feature type="glycosylation site" description="N-linked (GlcNAc...) asparagine" evidence="3">
    <location>
        <position position="107"/>
    </location>
</feature>
<feature type="glycosylation site" description="N-linked (GlcNAc...) asparagine" evidence="3">
    <location>
        <position position="212"/>
    </location>
</feature>
<feature type="glycosylation site" description="N-linked (GlcNAc...) asparagine" evidence="3">
    <location>
        <position position="347"/>
    </location>
</feature>
<feature type="glycosylation site" description="N-linked (GlcNAc...) asparagine" evidence="3">
    <location>
        <position position="456"/>
    </location>
</feature>
<feature type="glycosylation site" description="N-linked (GlcNAc...) asparagine" evidence="3">
    <location>
        <position position="603"/>
    </location>
</feature>
<feature type="glycosylation site" description="N-linked (GlcNAc...) asparagine" evidence="3">
    <location>
        <position position="654"/>
    </location>
</feature>
<feature type="glycosylation site" description="N-linked (GlcNAc...) asparagine" evidence="3">
    <location>
        <position position="661"/>
    </location>
</feature>
<feature type="glycosylation site" description="N-linked (GlcNAc...) asparagine" evidence="3">
    <location>
        <position position="679"/>
    </location>
</feature>
<feature type="disulfide bond" evidence="2">
    <location>
        <begin position="60"/>
        <end position="158"/>
    </location>
</feature>
<feature type="disulfide bond" evidence="2">
    <location>
        <begin position="131"/>
        <end position="150"/>
    </location>
</feature>
<feature type="disulfide bond" evidence="2">
    <location>
        <begin position="168"/>
        <end position="183"/>
    </location>
</feature>
<feature type="disulfide bond" evidence="2">
    <location>
        <begin position="185"/>
        <end position="194"/>
    </location>
</feature>
<feature type="disulfide bond" evidence="1">
    <location>
        <begin position="200"/>
        <end position="244"/>
    </location>
</feature>
<feature type="disulfide bond" evidence="1">
    <location>
        <begin position="230"/>
        <end position="257"/>
    </location>
</feature>
<feature type="disulfide bond" evidence="1">
    <location>
        <begin position="262"/>
        <end position="306"/>
    </location>
</feature>
<feature type="disulfide bond" evidence="1">
    <location>
        <begin position="292"/>
        <end position="319"/>
    </location>
</feature>
<feature type="disulfide bond" evidence="1">
    <location>
        <begin position="324"/>
        <end position="368"/>
    </location>
</feature>
<feature type="disulfide bond" evidence="1">
    <location>
        <begin position="354"/>
        <end position="381"/>
    </location>
</feature>
<feature type="disulfide bond" evidence="1">
    <location>
        <begin position="386"/>
        <end position="430"/>
    </location>
</feature>
<feature type="disulfide bond" evidence="1">
    <location>
        <begin position="416"/>
        <end position="443"/>
    </location>
</feature>
<feature type="disulfide bond" evidence="1">
    <location>
        <begin position="448"/>
        <end position="492"/>
    </location>
</feature>
<feature type="disulfide bond" evidence="1">
    <location>
        <begin position="478"/>
        <end position="505"/>
    </location>
</feature>
<feature type="disulfide bond" evidence="1">
    <location>
        <begin position="510"/>
        <end position="554"/>
    </location>
</feature>
<feature type="disulfide bond" evidence="1">
    <location>
        <begin position="540"/>
        <end position="567"/>
    </location>
</feature>
<feature type="disulfide bond" evidence="1">
    <location>
        <begin position="580"/>
        <end position="624"/>
    </location>
</feature>
<feature type="disulfide bond" evidence="1">
    <location>
        <begin position="610"/>
        <end position="637"/>
    </location>
</feature>
<feature type="disulfide bond" evidence="1">
    <location>
        <begin position="642"/>
        <end position="686"/>
    </location>
</feature>
<feature type="disulfide bond" evidence="1">
    <location>
        <begin position="672"/>
        <end position="699"/>
    </location>
</feature>
<accession>P98106</accession>